<comment type="function">
    <text evidence="1">Necessary for efficient RNA polymerase transcription elongation past template-encoded arresting sites. The arresting sites in DNA have the property of trapping a certain fraction of elongating RNA polymerases that pass through, resulting in locked ternary complexes. Cleavage of the nascent transcript by cleavage factors such as GreA or GreB allows the resumption of elongation from the new 3'terminus. GreA releases sequences of 2 to 3 nucleotides.</text>
</comment>
<comment type="similarity">
    <text evidence="1">Belongs to the GreA/GreB family.</text>
</comment>
<sequence length="162" mass="18221">MHKEPMTKYGYEKLSKELEYLKTTARPEVAKEIDSARELGDLKENAEYHAAKEKQSHIERRIAELSDILSRAVVVDPKEHAHNRVAFGSTVYLIDVDTDEKEKYTIVGAPEANPDKGLISYHSPLAKALIGKEVGDEVEVNLPGGVKVYEIDKICYEDICFS</sequence>
<dbReference type="EMBL" id="CP001279">
    <property type="protein sequence ID" value="ACM93492.1"/>
    <property type="molecule type" value="Genomic_DNA"/>
</dbReference>
<dbReference type="RefSeq" id="WP_015902544.1">
    <property type="nucleotide sequence ID" value="NC_012115.1"/>
</dbReference>
<dbReference type="SMR" id="B9L822"/>
<dbReference type="STRING" id="598659.NAMH_0357"/>
<dbReference type="KEGG" id="nam:NAMH_0357"/>
<dbReference type="eggNOG" id="COG0782">
    <property type="taxonomic scope" value="Bacteria"/>
</dbReference>
<dbReference type="HOGENOM" id="CLU_101379_2_0_7"/>
<dbReference type="OrthoDB" id="9808774at2"/>
<dbReference type="Proteomes" id="UP000000448">
    <property type="component" value="Chromosome"/>
</dbReference>
<dbReference type="GO" id="GO:0003677">
    <property type="term" value="F:DNA binding"/>
    <property type="evidence" value="ECO:0007669"/>
    <property type="project" value="UniProtKB-UniRule"/>
</dbReference>
<dbReference type="GO" id="GO:0070063">
    <property type="term" value="F:RNA polymerase binding"/>
    <property type="evidence" value="ECO:0007669"/>
    <property type="project" value="InterPro"/>
</dbReference>
<dbReference type="GO" id="GO:0006354">
    <property type="term" value="P:DNA-templated transcription elongation"/>
    <property type="evidence" value="ECO:0007669"/>
    <property type="project" value="TreeGrafter"/>
</dbReference>
<dbReference type="GO" id="GO:0032784">
    <property type="term" value="P:regulation of DNA-templated transcription elongation"/>
    <property type="evidence" value="ECO:0007669"/>
    <property type="project" value="UniProtKB-UniRule"/>
</dbReference>
<dbReference type="FunFam" id="1.10.287.180:FF:000001">
    <property type="entry name" value="Transcription elongation factor GreA"/>
    <property type="match status" value="1"/>
</dbReference>
<dbReference type="FunFam" id="3.10.50.30:FF:000001">
    <property type="entry name" value="Transcription elongation factor GreA"/>
    <property type="match status" value="1"/>
</dbReference>
<dbReference type="Gene3D" id="3.10.50.30">
    <property type="entry name" value="Transcription elongation factor, GreA/GreB, C-terminal domain"/>
    <property type="match status" value="1"/>
</dbReference>
<dbReference type="Gene3D" id="1.10.287.180">
    <property type="entry name" value="Transcription elongation factor, GreA/GreB, N-terminal domain"/>
    <property type="match status" value="1"/>
</dbReference>
<dbReference type="HAMAP" id="MF_00105">
    <property type="entry name" value="GreA_GreB"/>
    <property type="match status" value="1"/>
</dbReference>
<dbReference type="InterPro" id="IPR036953">
    <property type="entry name" value="GreA/GreB_C_sf"/>
</dbReference>
<dbReference type="InterPro" id="IPR018151">
    <property type="entry name" value="TF_GreA/GreB_CS"/>
</dbReference>
<dbReference type="InterPro" id="IPR006359">
    <property type="entry name" value="Tscrpt_elong_fac_GreA"/>
</dbReference>
<dbReference type="InterPro" id="IPR028624">
    <property type="entry name" value="Tscrpt_elong_fac_GreA/B"/>
</dbReference>
<dbReference type="InterPro" id="IPR001437">
    <property type="entry name" value="Tscrpt_elong_fac_GreA/B_C"/>
</dbReference>
<dbReference type="InterPro" id="IPR023459">
    <property type="entry name" value="Tscrpt_elong_fac_GreA/B_fam"/>
</dbReference>
<dbReference type="InterPro" id="IPR022691">
    <property type="entry name" value="Tscrpt_elong_fac_GreA/B_N"/>
</dbReference>
<dbReference type="InterPro" id="IPR036805">
    <property type="entry name" value="Tscrpt_elong_fac_GreA/B_N_sf"/>
</dbReference>
<dbReference type="NCBIfam" id="TIGR01462">
    <property type="entry name" value="greA"/>
    <property type="match status" value="1"/>
</dbReference>
<dbReference type="NCBIfam" id="NF001261">
    <property type="entry name" value="PRK00226.1-2"/>
    <property type="match status" value="1"/>
</dbReference>
<dbReference type="NCBIfam" id="NF001263">
    <property type="entry name" value="PRK00226.1-4"/>
    <property type="match status" value="1"/>
</dbReference>
<dbReference type="NCBIfam" id="NF001264">
    <property type="entry name" value="PRK00226.1-5"/>
    <property type="match status" value="1"/>
</dbReference>
<dbReference type="PANTHER" id="PTHR30437">
    <property type="entry name" value="TRANSCRIPTION ELONGATION FACTOR GREA"/>
    <property type="match status" value="1"/>
</dbReference>
<dbReference type="PANTHER" id="PTHR30437:SF4">
    <property type="entry name" value="TRANSCRIPTION ELONGATION FACTOR GREA"/>
    <property type="match status" value="1"/>
</dbReference>
<dbReference type="Pfam" id="PF01272">
    <property type="entry name" value="GreA_GreB"/>
    <property type="match status" value="1"/>
</dbReference>
<dbReference type="Pfam" id="PF03449">
    <property type="entry name" value="GreA_GreB_N"/>
    <property type="match status" value="1"/>
</dbReference>
<dbReference type="PIRSF" id="PIRSF006092">
    <property type="entry name" value="GreA_GreB"/>
    <property type="match status" value="1"/>
</dbReference>
<dbReference type="SUPFAM" id="SSF54534">
    <property type="entry name" value="FKBP-like"/>
    <property type="match status" value="1"/>
</dbReference>
<dbReference type="SUPFAM" id="SSF46557">
    <property type="entry name" value="GreA transcript cleavage protein, N-terminal domain"/>
    <property type="match status" value="1"/>
</dbReference>
<dbReference type="PROSITE" id="PS00829">
    <property type="entry name" value="GREAB_1"/>
    <property type="match status" value="1"/>
</dbReference>
<dbReference type="PROSITE" id="PS00830">
    <property type="entry name" value="GREAB_2"/>
    <property type="match status" value="1"/>
</dbReference>
<name>GREA_NAUPA</name>
<gene>
    <name evidence="1" type="primary">greA</name>
    <name type="ordered locus">NAMH_0357</name>
</gene>
<protein>
    <recommendedName>
        <fullName evidence="1">Transcription elongation factor GreA</fullName>
    </recommendedName>
    <alternativeName>
        <fullName evidence="1">Transcript cleavage factor GreA</fullName>
    </alternativeName>
</protein>
<evidence type="ECO:0000255" key="1">
    <source>
        <dbReference type="HAMAP-Rule" id="MF_00105"/>
    </source>
</evidence>
<accession>B9L822</accession>
<reference key="1">
    <citation type="journal article" date="2009" name="PLoS Genet.">
        <title>Adaptations to submarine hydrothermal environments exemplified by the genome of Nautilia profundicola.</title>
        <authorList>
            <person name="Campbell B.J."/>
            <person name="Smith J.L."/>
            <person name="Hanson T.E."/>
            <person name="Klotz M.G."/>
            <person name="Stein L.Y."/>
            <person name="Lee C.K."/>
            <person name="Wu D."/>
            <person name="Robinson J.M."/>
            <person name="Khouri H.M."/>
            <person name="Eisen J.A."/>
            <person name="Cary S.C."/>
        </authorList>
    </citation>
    <scope>NUCLEOTIDE SEQUENCE [LARGE SCALE GENOMIC DNA]</scope>
    <source>
        <strain>ATCC BAA-1463 / DSM 18972 / AmH</strain>
    </source>
</reference>
<organism>
    <name type="scientific">Nautilia profundicola (strain ATCC BAA-1463 / DSM 18972 / AmH)</name>
    <dbReference type="NCBI Taxonomy" id="598659"/>
    <lineage>
        <taxon>Bacteria</taxon>
        <taxon>Pseudomonadati</taxon>
        <taxon>Campylobacterota</taxon>
        <taxon>Epsilonproteobacteria</taxon>
        <taxon>Nautiliales</taxon>
        <taxon>Nautiliaceae</taxon>
        <taxon>Nautilia</taxon>
    </lineage>
</organism>
<keyword id="KW-0175">Coiled coil</keyword>
<keyword id="KW-0238">DNA-binding</keyword>
<keyword id="KW-0804">Transcription</keyword>
<keyword id="KW-0805">Transcription regulation</keyword>
<feature type="chain" id="PRO_1000190222" description="Transcription elongation factor GreA">
    <location>
        <begin position="1"/>
        <end position="162"/>
    </location>
</feature>
<feature type="coiled-coil region" evidence="1">
    <location>
        <begin position="44"/>
        <end position="72"/>
    </location>
</feature>
<proteinExistence type="inferred from homology"/>